<keyword id="KW-0963">Cytoplasm</keyword>
<keyword id="KW-0448">Lipopolysaccharide biosynthesis</keyword>
<keyword id="KW-1185">Reference proteome</keyword>
<keyword id="KW-0808">Transferase</keyword>
<sequence>MMEQKTVRVGDIDVANDKPFVLFGGMNVLESRDLAMKICEHYVEVTNKLGIPFVFKASFDKANRSSVHSYRGPGMEEGLKIFQELKDTFGVKIITDIHEIYQAQPVADVVDVIQLPAFLARQTDLVEAMAKTGAVINVKKPQYMSPGQVGNIVEKFAECDNENVILCERGALHGYDNLVVDMLGFDVMKKASKGSPIIFDVTHALQCRDPLGAASGGRREQTVDLARSGIATGIAGLFMEAHPAPDQARCDGPSAFPLDKLEPFLNQIKQLDDLIKGFEAIEIN</sequence>
<reference key="1">
    <citation type="journal article" date="2005" name="Science">
        <title>Life at depth: Photobacterium profundum genome sequence and expression analysis.</title>
        <authorList>
            <person name="Vezzi A."/>
            <person name="Campanaro S."/>
            <person name="D'Angelo M."/>
            <person name="Simonato F."/>
            <person name="Vitulo N."/>
            <person name="Lauro F.M."/>
            <person name="Cestaro A."/>
            <person name="Malacrida G."/>
            <person name="Simionati B."/>
            <person name="Cannata N."/>
            <person name="Romualdi C."/>
            <person name="Bartlett D.H."/>
            <person name="Valle G."/>
        </authorList>
    </citation>
    <scope>NUCLEOTIDE SEQUENCE [LARGE SCALE GENOMIC DNA]</scope>
    <source>
        <strain>ATCC BAA-1253 / SS9</strain>
    </source>
</reference>
<feature type="chain" id="PRO_0000187148" description="2-dehydro-3-deoxyphosphooctonate aldolase">
    <location>
        <begin position="1"/>
        <end position="284"/>
    </location>
</feature>
<name>KDSA_PHOPR</name>
<proteinExistence type="inferred from homology"/>
<organism>
    <name type="scientific">Photobacterium profundum (strain SS9)</name>
    <dbReference type="NCBI Taxonomy" id="298386"/>
    <lineage>
        <taxon>Bacteria</taxon>
        <taxon>Pseudomonadati</taxon>
        <taxon>Pseudomonadota</taxon>
        <taxon>Gammaproteobacteria</taxon>
        <taxon>Vibrionales</taxon>
        <taxon>Vibrionaceae</taxon>
        <taxon>Photobacterium</taxon>
    </lineage>
</organism>
<accession>Q6LNB8</accession>
<dbReference type="EC" id="2.5.1.55" evidence="1"/>
<dbReference type="EMBL" id="CR378672">
    <property type="protein sequence ID" value="CAG21208.1"/>
    <property type="molecule type" value="Genomic_DNA"/>
</dbReference>
<dbReference type="RefSeq" id="WP_011219480.1">
    <property type="nucleotide sequence ID" value="NC_006370.1"/>
</dbReference>
<dbReference type="SMR" id="Q6LNB8"/>
<dbReference type="STRING" id="298386.PBPRA2841"/>
<dbReference type="KEGG" id="ppr:PBPRA2841"/>
<dbReference type="eggNOG" id="COG2877">
    <property type="taxonomic scope" value="Bacteria"/>
</dbReference>
<dbReference type="HOGENOM" id="CLU_036666_0_0_6"/>
<dbReference type="UniPathway" id="UPA00030"/>
<dbReference type="UniPathway" id="UPA00357">
    <property type="reaction ID" value="UER00474"/>
</dbReference>
<dbReference type="Proteomes" id="UP000000593">
    <property type="component" value="Chromosome 1"/>
</dbReference>
<dbReference type="GO" id="GO:0005737">
    <property type="term" value="C:cytoplasm"/>
    <property type="evidence" value="ECO:0007669"/>
    <property type="project" value="UniProtKB-SubCell"/>
</dbReference>
<dbReference type="GO" id="GO:0008676">
    <property type="term" value="F:3-deoxy-8-phosphooctulonate synthase activity"/>
    <property type="evidence" value="ECO:0007669"/>
    <property type="project" value="UniProtKB-UniRule"/>
</dbReference>
<dbReference type="GO" id="GO:0019294">
    <property type="term" value="P:keto-3-deoxy-D-manno-octulosonic acid biosynthetic process"/>
    <property type="evidence" value="ECO:0007669"/>
    <property type="project" value="UniProtKB-UniRule"/>
</dbReference>
<dbReference type="FunFam" id="3.20.20.70:FF:000058">
    <property type="entry name" value="2-dehydro-3-deoxyphosphooctonate aldolase"/>
    <property type="match status" value="1"/>
</dbReference>
<dbReference type="Gene3D" id="3.20.20.70">
    <property type="entry name" value="Aldolase class I"/>
    <property type="match status" value="1"/>
</dbReference>
<dbReference type="HAMAP" id="MF_00056">
    <property type="entry name" value="KDO8P_synth"/>
    <property type="match status" value="1"/>
</dbReference>
<dbReference type="InterPro" id="IPR013785">
    <property type="entry name" value="Aldolase_TIM"/>
</dbReference>
<dbReference type="InterPro" id="IPR006218">
    <property type="entry name" value="DAHP1/KDSA"/>
</dbReference>
<dbReference type="InterPro" id="IPR006269">
    <property type="entry name" value="KDO8P_synthase"/>
</dbReference>
<dbReference type="NCBIfam" id="TIGR01362">
    <property type="entry name" value="KDO8P_synth"/>
    <property type="match status" value="1"/>
</dbReference>
<dbReference type="NCBIfam" id="NF003543">
    <property type="entry name" value="PRK05198.1"/>
    <property type="match status" value="1"/>
</dbReference>
<dbReference type="NCBIfam" id="NF009109">
    <property type="entry name" value="PRK12457.1"/>
    <property type="match status" value="1"/>
</dbReference>
<dbReference type="PANTHER" id="PTHR21057">
    <property type="entry name" value="PHOSPHO-2-DEHYDRO-3-DEOXYHEPTONATE ALDOLASE"/>
    <property type="match status" value="1"/>
</dbReference>
<dbReference type="Pfam" id="PF00793">
    <property type="entry name" value="DAHP_synth_1"/>
    <property type="match status" value="1"/>
</dbReference>
<dbReference type="SUPFAM" id="SSF51569">
    <property type="entry name" value="Aldolase"/>
    <property type="match status" value="1"/>
</dbReference>
<evidence type="ECO:0000255" key="1">
    <source>
        <dbReference type="HAMAP-Rule" id="MF_00056"/>
    </source>
</evidence>
<comment type="catalytic activity">
    <reaction evidence="1">
        <text>D-arabinose 5-phosphate + phosphoenolpyruvate + H2O = 3-deoxy-alpha-D-manno-2-octulosonate-8-phosphate + phosphate</text>
        <dbReference type="Rhea" id="RHEA:14053"/>
        <dbReference type="ChEBI" id="CHEBI:15377"/>
        <dbReference type="ChEBI" id="CHEBI:43474"/>
        <dbReference type="ChEBI" id="CHEBI:57693"/>
        <dbReference type="ChEBI" id="CHEBI:58702"/>
        <dbReference type="ChEBI" id="CHEBI:85985"/>
        <dbReference type="EC" id="2.5.1.55"/>
    </reaction>
</comment>
<comment type="pathway">
    <text evidence="1">Carbohydrate biosynthesis; 3-deoxy-D-manno-octulosonate biosynthesis; 3-deoxy-D-manno-octulosonate from D-ribulose 5-phosphate: step 2/3.</text>
</comment>
<comment type="pathway">
    <text evidence="1">Bacterial outer membrane biogenesis; lipopolysaccharide biosynthesis.</text>
</comment>
<comment type="subcellular location">
    <subcellularLocation>
        <location evidence="1">Cytoplasm</location>
    </subcellularLocation>
</comment>
<comment type="similarity">
    <text evidence="1">Belongs to the KdsA family.</text>
</comment>
<protein>
    <recommendedName>
        <fullName evidence="1">2-dehydro-3-deoxyphosphooctonate aldolase</fullName>
        <ecNumber evidence="1">2.5.1.55</ecNumber>
    </recommendedName>
    <alternativeName>
        <fullName evidence="1">3-deoxy-D-manno-octulosonic acid 8-phosphate synthase</fullName>
    </alternativeName>
    <alternativeName>
        <fullName evidence="1">KDO-8-phosphate synthase</fullName>
        <shortName evidence="1">KDO 8-P synthase</shortName>
        <shortName evidence="1">KDOPS</shortName>
    </alternativeName>
    <alternativeName>
        <fullName evidence="1">Phospho-2-dehydro-3-deoxyoctonate aldolase</fullName>
    </alternativeName>
</protein>
<gene>
    <name evidence="1" type="primary">kdsA</name>
    <name type="ordered locus">PBPRA2841</name>
</gene>